<organism>
    <name type="scientific">Escherichia coli O157:H7 (strain EC4115 / EHEC)</name>
    <dbReference type="NCBI Taxonomy" id="444450"/>
    <lineage>
        <taxon>Bacteria</taxon>
        <taxon>Pseudomonadati</taxon>
        <taxon>Pseudomonadota</taxon>
        <taxon>Gammaproteobacteria</taxon>
        <taxon>Enterobacterales</taxon>
        <taxon>Enterobacteriaceae</taxon>
        <taxon>Escherichia</taxon>
    </lineage>
</organism>
<comment type="function">
    <text evidence="1">Involved in the efflux of sugars. The physiological role may be the reduction of the intracellular concentration of toxic sugars or sugar metabolites.</text>
</comment>
<comment type="subcellular location">
    <subcellularLocation>
        <location evidence="1">Cell inner membrane</location>
        <topology evidence="1">Multi-pass membrane protein</topology>
    </subcellularLocation>
</comment>
<comment type="similarity">
    <text evidence="1">Belongs to the major facilitator superfamily. SotB (TC 2.A.1.2) family.</text>
</comment>
<name>SOTB_ECO5E</name>
<evidence type="ECO:0000255" key="1">
    <source>
        <dbReference type="HAMAP-Rule" id="MF_00517"/>
    </source>
</evidence>
<dbReference type="EMBL" id="CP001164">
    <property type="protein sequence ID" value="ACI39145.1"/>
    <property type="molecule type" value="Genomic_DNA"/>
</dbReference>
<dbReference type="SMR" id="B5Z1Y4"/>
<dbReference type="KEGG" id="ecf:ECH74115_2142"/>
<dbReference type="HOGENOM" id="CLU_001265_61_1_6"/>
<dbReference type="GO" id="GO:0005886">
    <property type="term" value="C:plasma membrane"/>
    <property type="evidence" value="ECO:0007669"/>
    <property type="project" value="UniProtKB-SubCell"/>
</dbReference>
<dbReference type="GO" id="GO:0015144">
    <property type="term" value="F:carbohydrate transmembrane transporter activity"/>
    <property type="evidence" value="ECO:0007669"/>
    <property type="project" value="UniProtKB-UniRule"/>
</dbReference>
<dbReference type="CDD" id="cd17324">
    <property type="entry name" value="MFS_NepI_like"/>
    <property type="match status" value="1"/>
</dbReference>
<dbReference type="FunFam" id="1.20.1250.20:FF:000079">
    <property type="entry name" value="Probable sugar efflux transporter"/>
    <property type="match status" value="1"/>
</dbReference>
<dbReference type="Gene3D" id="1.20.1250.20">
    <property type="entry name" value="MFS general substrate transporter like domains"/>
    <property type="match status" value="1"/>
</dbReference>
<dbReference type="HAMAP" id="MF_00517">
    <property type="entry name" value="MFS_SotB"/>
    <property type="match status" value="1"/>
</dbReference>
<dbReference type="InterPro" id="IPR011701">
    <property type="entry name" value="MFS"/>
</dbReference>
<dbReference type="InterPro" id="IPR020846">
    <property type="entry name" value="MFS_dom"/>
</dbReference>
<dbReference type="InterPro" id="IPR050189">
    <property type="entry name" value="MFS_Efflux_Transporters"/>
</dbReference>
<dbReference type="InterPro" id="IPR036259">
    <property type="entry name" value="MFS_trans_sf"/>
</dbReference>
<dbReference type="InterPro" id="IPR023495">
    <property type="entry name" value="Sugar_effux_transptr_put"/>
</dbReference>
<dbReference type="NCBIfam" id="NF002921">
    <property type="entry name" value="PRK03545.1"/>
    <property type="match status" value="1"/>
</dbReference>
<dbReference type="PANTHER" id="PTHR43124">
    <property type="entry name" value="PURINE EFFLUX PUMP PBUE"/>
    <property type="match status" value="1"/>
</dbReference>
<dbReference type="PANTHER" id="PTHR43124:SF4">
    <property type="entry name" value="SUGAR EFFLUX TRANSPORTER"/>
    <property type="match status" value="1"/>
</dbReference>
<dbReference type="Pfam" id="PF07690">
    <property type="entry name" value="MFS_1"/>
    <property type="match status" value="1"/>
</dbReference>
<dbReference type="SUPFAM" id="SSF103473">
    <property type="entry name" value="MFS general substrate transporter"/>
    <property type="match status" value="1"/>
</dbReference>
<dbReference type="PROSITE" id="PS50850">
    <property type="entry name" value="MFS"/>
    <property type="match status" value="1"/>
</dbReference>
<feature type="chain" id="PRO_1000127455" description="Probable sugar efflux transporter">
    <location>
        <begin position="1"/>
        <end position="396"/>
    </location>
</feature>
<feature type="transmembrane region" description="Helical" evidence="1">
    <location>
        <begin position="15"/>
        <end position="35"/>
    </location>
</feature>
<feature type="transmembrane region" description="Helical" evidence="1">
    <location>
        <begin position="50"/>
        <end position="70"/>
    </location>
</feature>
<feature type="transmembrane region" description="Helical" evidence="1">
    <location>
        <begin position="81"/>
        <end position="101"/>
    </location>
</feature>
<feature type="transmembrane region" description="Helical" evidence="1">
    <location>
        <begin position="103"/>
        <end position="123"/>
    </location>
</feature>
<feature type="transmembrane region" description="Helical" evidence="1">
    <location>
        <begin position="136"/>
        <end position="156"/>
    </location>
</feature>
<feature type="transmembrane region" description="Helical" evidence="1">
    <location>
        <begin position="170"/>
        <end position="190"/>
    </location>
</feature>
<feature type="transmembrane region" description="Helical" evidence="1">
    <location>
        <begin position="209"/>
        <end position="229"/>
    </location>
</feature>
<feature type="transmembrane region" description="Helical" evidence="1">
    <location>
        <begin position="246"/>
        <end position="266"/>
    </location>
</feature>
<feature type="transmembrane region" description="Helical" evidence="1">
    <location>
        <begin position="275"/>
        <end position="295"/>
    </location>
</feature>
<feature type="transmembrane region" description="Helical" evidence="1">
    <location>
        <begin position="299"/>
        <end position="319"/>
    </location>
</feature>
<feature type="transmembrane region" description="Helical" evidence="1">
    <location>
        <begin position="333"/>
        <end position="353"/>
    </location>
</feature>
<feature type="transmembrane region" description="Helical" evidence="1">
    <location>
        <begin position="364"/>
        <end position="384"/>
    </location>
</feature>
<reference key="1">
    <citation type="journal article" date="2011" name="Proc. Natl. Acad. Sci. U.S.A.">
        <title>Genomic anatomy of Escherichia coli O157:H7 outbreaks.</title>
        <authorList>
            <person name="Eppinger M."/>
            <person name="Mammel M.K."/>
            <person name="Leclerc J.E."/>
            <person name="Ravel J."/>
            <person name="Cebula T.A."/>
        </authorList>
    </citation>
    <scope>NUCLEOTIDE SEQUENCE [LARGE SCALE GENOMIC DNA]</scope>
    <source>
        <strain>EC4115 / EHEC</strain>
    </source>
</reference>
<gene>
    <name evidence="1" type="primary">sotB</name>
    <name type="ordered locus">ECH74115_2142</name>
</gene>
<protein>
    <recommendedName>
        <fullName evidence="1">Probable sugar efflux transporter</fullName>
    </recommendedName>
</protein>
<proteinExistence type="inferred from homology"/>
<keyword id="KW-0997">Cell inner membrane</keyword>
<keyword id="KW-1003">Cell membrane</keyword>
<keyword id="KW-0472">Membrane</keyword>
<keyword id="KW-0762">Sugar transport</keyword>
<keyword id="KW-0812">Transmembrane</keyword>
<keyword id="KW-1133">Transmembrane helix</keyword>
<keyword id="KW-0813">Transport</keyword>
<sequence length="396" mass="42495">MTTNTVSRKVAWLRVVTLAVAAFIFNTTEFVPVGLLSDIAQSFHMQTAQVGIMLTIYAWVVALMSLPFMLMTSQVERRKLLICLFVVFIASHVLSFLSWSFTVLVISRIGVAFAHAIFWSITASLAIRMAPAGKRAQALSLIATGTALAMVLGLPLGRIVGQYFGWRMTFFAIGIGALITLLCLIKLLPLLPSEHSGSLKSLPLLFRRPALMSIYLLTVVVVTAHYTAYSYIEPFVQNIAGFSANFATALLLLLGGAGIIGSVIFGKLGNQYASALVSTAIALLLVCLALLLPAANSEIHLGVLSIFWGIAMMIIGLGMQVKVLALAPDATDVAMALFSGIFNIGIGAGALVGNQVSLHLSMSMIGYVGTVPAFAALIWSIIIFRRWPVTLEEQTQ</sequence>
<accession>B5Z1Y4</accession>